<organism>
    <name type="scientific">Chlamydia pneumoniae</name>
    <name type="common">Chlamydophila pneumoniae</name>
    <dbReference type="NCBI Taxonomy" id="83558"/>
    <lineage>
        <taxon>Bacteria</taxon>
        <taxon>Pseudomonadati</taxon>
        <taxon>Chlamydiota</taxon>
        <taxon>Chlamydiia</taxon>
        <taxon>Chlamydiales</taxon>
        <taxon>Chlamydiaceae</taxon>
        <taxon>Chlamydia/Chlamydophila group</taxon>
        <taxon>Chlamydia</taxon>
    </lineage>
</organism>
<proteinExistence type="inferred from homology"/>
<evidence type="ECO:0000250" key="1"/>
<evidence type="ECO:0000305" key="2"/>
<name>VATD_CHLPN</name>
<sequence length="209" mass="23788">MSVQVKLTKNSFRLEKQKLARLQTYLPTLKLKKALLQAEVQNAVKDAAECDKDYVQAYERIYAFAELFSIPLCTDCVEKSFEIQSIDNDFENIAGVEVPIVREVTLFPASYSLLGTPIWLDTMLSASKELVVKKVMAEVSKERLKILEEELRAVSIRVNLFEKKLIPETTKILKKIAVFLSDRSITDVGQVKMAKKKIELRKARGDECV</sequence>
<gene>
    <name type="primary">atpD</name>
    <name type="ordered locus">CPn_0090</name>
    <name type="ordered locus">CP_0684</name>
    <name type="ordered locus">CpB0090</name>
</gene>
<protein>
    <recommendedName>
        <fullName>V-type ATP synthase subunit D</fullName>
    </recommendedName>
    <alternativeName>
        <fullName>V-ATPase subunit D</fullName>
    </alternativeName>
</protein>
<reference key="1">
    <citation type="journal article" date="1999" name="Nat. Genet.">
        <title>Comparative genomes of Chlamydia pneumoniae and C. trachomatis.</title>
        <authorList>
            <person name="Kalman S."/>
            <person name="Mitchell W.P."/>
            <person name="Marathe R."/>
            <person name="Lammel C.J."/>
            <person name="Fan J."/>
            <person name="Hyman R.W."/>
            <person name="Olinger L."/>
            <person name="Grimwood J."/>
            <person name="Davis R.W."/>
            <person name="Stephens R.S."/>
        </authorList>
    </citation>
    <scope>NUCLEOTIDE SEQUENCE [LARGE SCALE GENOMIC DNA]</scope>
    <source>
        <strain>CWL029</strain>
    </source>
</reference>
<reference key="2">
    <citation type="journal article" date="2000" name="Nucleic Acids Res.">
        <title>Genome sequences of Chlamydia trachomatis MoPn and Chlamydia pneumoniae AR39.</title>
        <authorList>
            <person name="Read T.D."/>
            <person name="Brunham R.C."/>
            <person name="Shen C."/>
            <person name="Gill S.R."/>
            <person name="Heidelberg J.F."/>
            <person name="White O."/>
            <person name="Hickey E.K."/>
            <person name="Peterson J.D."/>
            <person name="Utterback T.R."/>
            <person name="Berry K.J."/>
            <person name="Bass S."/>
            <person name="Linher K.D."/>
            <person name="Weidman J.F."/>
            <person name="Khouri H.M."/>
            <person name="Craven B."/>
            <person name="Bowman C."/>
            <person name="Dodson R.J."/>
            <person name="Gwinn M.L."/>
            <person name="Nelson W.C."/>
            <person name="DeBoy R.T."/>
            <person name="Kolonay J.F."/>
            <person name="McClarty G."/>
            <person name="Salzberg S.L."/>
            <person name="Eisen J.A."/>
            <person name="Fraser C.M."/>
        </authorList>
    </citation>
    <scope>NUCLEOTIDE SEQUENCE [LARGE SCALE GENOMIC DNA]</scope>
    <source>
        <strain>AR39</strain>
    </source>
</reference>
<reference key="3">
    <citation type="journal article" date="2000" name="Nucleic Acids Res.">
        <title>Comparison of whole genome sequences of Chlamydia pneumoniae J138 from Japan and CWL029 from USA.</title>
        <authorList>
            <person name="Shirai M."/>
            <person name="Hirakawa H."/>
            <person name="Kimoto M."/>
            <person name="Tabuchi M."/>
            <person name="Kishi F."/>
            <person name="Ouchi K."/>
            <person name="Shiba T."/>
            <person name="Ishii K."/>
            <person name="Hattori M."/>
            <person name="Kuhara S."/>
            <person name="Nakazawa T."/>
        </authorList>
    </citation>
    <scope>NUCLEOTIDE SEQUENCE [LARGE SCALE GENOMIC DNA]</scope>
    <source>
        <strain>J138</strain>
    </source>
</reference>
<reference key="4">
    <citation type="submission" date="2002-05" db="EMBL/GenBank/DDBJ databases">
        <title>The genome sequence of Chlamydia pneumoniae TW183 and comparison with other Chlamydia strains based on whole genome sequence analysis.</title>
        <authorList>
            <person name="Geng M.M."/>
            <person name="Schuhmacher A."/>
            <person name="Muehldorfer I."/>
            <person name="Bensch K.W."/>
            <person name="Schaefer K.P."/>
            <person name="Schneider S."/>
            <person name="Pohl T."/>
            <person name="Essig A."/>
            <person name="Marre R."/>
            <person name="Melchers K."/>
        </authorList>
    </citation>
    <scope>NUCLEOTIDE SEQUENCE [LARGE SCALE GENOMIC DNA]</scope>
    <source>
        <strain>TW-183</strain>
    </source>
</reference>
<keyword id="KW-0066">ATP synthesis</keyword>
<keyword id="KW-0375">Hydrogen ion transport</keyword>
<keyword id="KW-0406">Ion transport</keyword>
<keyword id="KW-0813">Transport</keyword>
<accession>Q9Z991</accession>
<feature type="chain" id="PRO_0000144265" description="V-type ATP synthase subunit D">
    <location>
        <begin position="1"/>
        <end position="209"/>
    </location>
</feature>
<dbReference type="EMBL" id="AE001363">
    <property type="protein sequence ID" value="AAD18243.1"/>
    <property type="molecule type" value="Genomic_DNA"/>
</dbReference>
<dbReference type="EMBL" id="AE002161">
    <property type="protein sequence ID" value="AAF73696.1"/>
    <property type="molecule type" value="Genomic_DNA"/>
</dbReference>
<dbReference type="EMBL" id="BA000008">
    <property type="protein sequence ID" value="BAA98300.1"/>
    <property type="molecule type" value="Genomic_DNA"/>
</dbReference>
<dbReference type="EMBL" id="AE009440">
    <property type="protein sequence ID" value="AAP98023.1"/>
    <property type="status" value="ALT_INIT"/>
    <property type="molecule type" value="Genomic_DNA"/>
</dbReference>
<dbReference type="PIR" id="B86502">
    <property type="entry name" value="B86502"/>
</dbReference>
<dbReference type="PIR" id="D72121">
    <property type="entry name" value="D72121"/>
</dbReference>
<dbReference type="RefSeq" id="NP_224298.1">
    <property type="nucleotide sequence ID" value="NC_000922.1"/>
</dbReference>
<dbReference type="RefSeq" id="WP_010882740.1">
    <property type="nucleotide sequence ID" value="NZ_LN847257.1"/>
</dbReference>
<dbReference type="SMR" id="Q9Z991"/>
<dbReference type="STRING" id="406984.CPK_ORF00600"/>
<dbReference type="GeneID" id="45050135"/>
<dbReference type="KEGG" id="cpa:CP_0684"/>
<dbReference type="KEGG" id="cpj:atpD"/>
<dbReference type="KEGG" id="cpn:CPn_0090"/>
<dbReference type="KEGG" id="cpt:CpB0090"/>
<dbReference type="PATRIC" id="fig|115713.3.peg.103"/>
<dbReference type="eggNOG" id="COG1394">
    <property type="taxonomic scope" value="Bacteria"/>
</dbReference>
<dbReference type="HOGENOM" id="CLU_113661_0_0_0"/>
<dbReference type="OrthoDB" id="5637912at2"/>
<dbReference type="Proteomes" id="UP000000583">
    <property type="component" value="Chromosome"/>
</dbReference>
<dbReference type="Proteomes" id="UP000000801">
    <property type="component" value="Chromosome"/>
</dbReference>
<dbReference type="GO" id="GO:0005524">
    <property type="term" value="F:ATP binding"/>
    <property type="evidence" value="ECO:0007669"/>
    <property type="project" value="UniProtKB-UniRule"/>
</dbReference>
<dbReference type="GO" id="GO:0046933">
    <property type="term" value="F:proton-transporting ATP synthase activity, rotational mechanism"/>
    <property type="evidence" value="ECO:0007669"/>
    <property type="project" value="UniProtKB-UniRule"/>
</dbReference>
<dbReference type="GO" id="GO:0046961">
    <property type="term" value="F:proton-transporting ATPase activity, rotational mechanism"/>
    <property type="evidence" value="ECO:0007669"/>
    <property type="project" value="InterPro"/>
</dbReference>
<dbReference type="GO" id="GO:0042777">
    <property type="term" value="P:proton motive force-driven plasma membrane ATP synthesis"/>
    <property type="evidence" value="ECO:0007669"/>
    <property type="project" value="UniProtKB-UniRule"/>
</dbReference>
<dbReference type="Gene3D" id="1.10.287.3240">
    <property type="match status" value="1"/>
</dbReference>
<dbReference type="HAMAP" id="MF_00271">
    <property type="entry name" value="ATP_synth_D_arch"/>
    <property type="match status" value="1"/>
</dbReference>
<dbReference type="InterPro" id="IPR002699">
    <property type="entry name" value="V_ATPase_D"/>
</dbReference>
<dbReference type="NCBIfam" id="NF002565">
    <property type="entry name" value="PRK02195.1"/>
    <property type="match status" value="1"/>
</dbReference>
<dbReference type="NCBIfam" id="TIGR00309">
    <property type="entry name" value="V_ATPase_subD"/>
    <property type="match status" value="1"/>
</dbReference>
<dbReference type="PANTHER" id="PTHR11671">
    <property type="entry name" value="V-TYPE ATP SYNTHASE SUBUNIT D"/>
    <property type="match status" value="1"/>
</dbReference>
<dbReference type="Pfam" id="PF01813">
    <property type="entry name" value="ATP-synt_D"/>
    <property type="match status" value="1"/>
</dbReference>
<comment type="function">
    <text evidence="1">Produces ATP from ADP in the presence of a proton gradient across the membrane.</text>
</comment>
<comment type="similarity">
    <text evidence="2">Belongs to the V-ATPase D subunit family.</text>
</comment>
<comment type="sequence caution" evidence="2">
    <conflict type="erroneous initiation">
        <sequence resource="EMBL-CDS" id="AAP98023"/>
    </conflict>
</comment>